<gene>
    <name evidence="1" type="primary">rplE</name>
    <name type="ordered locus">Haur_4926</name>
</gene>
<name>RL5_HERA2</name>
<reference key="1">
    <citation type="journal article" date="2011" name="Stand. Genomic Sci.">
        <title>Complete genome sequence of the filamentous gliding predatory bacterium Herpetosiphon aurantiacus type strain (114-95(T)).</title>
        <authorList>
            <person name="Kiss H."/>
            <person name="Nett M."/>
            <person name="Domin N."/>
            <person name="Martin K."/>
            <person name="Maresca J.A."/>
            <person name="Copeland A."/>
            <person name="Lapidus A."/>
            <person name="Lucas S."/>
            <person name="Berry K.W."/>
            <person name="Glavina Del Rio T."/>
            <person name="Dalin E."/>
            <person name="Tice H."/>
            <person name="Pitluck S."/>
            <person name="Richardson P."/>
            <person name="Bruce D."/>
            <person name="Goodwin L."/>
            <person name="Han C."/>
            <person name="Detter J.C."/>
            <person name="Schmutz J."/>
            <person name="Brettin T."/>
            <person name="Land M."/>
            <person name="Hauser L."/>
            <person name="Kyrpides N.C."/>
            <person name="Ivanova N."/>
            <person name="Goeker M."/>
            <person name="Woyke T."/>
            <person name="Klenk H.P."/>
            <person name="Bryant D.A."/>
        </authorList>
    </citation>
    <scope>NUCLEOTIDE SEQUENCE [LARGE SCALE GENOMIC DNA]</scope>
    <source>
        <strain>ATCC 23779 / DSM 785 / 114-95</strain>
    </source>
</reference>
<evidence type="ECO:0000255" key="1">
    <source>
        <dbReference type="HAMAP-Rule" id="MF_01333"/>
    </source>
</evidence>
<evidence type="ECO:0000305" key="2"/>
<organism>
    <name type="scientific">Herpetosiphon aurantiacus (strain ATCC 23779 / DSM 785 / 114-95)</name>
    <dbReference type="NCBI Taxonomy" id="316274"/>
    <lineage>
        <taxon>Bacteria</taxon>
        <taxon>Bacillati</taxon>
        <taxon>Chloroflexota</taxon>
        <taxon>Chloroflexia</taxon>
        <taxon>Herpetosiphonales</taxon>
        <taxon>Herpetosiphonaceae</taxon>
        <taxon>Herpetosiphon</taxon>
    </lineage>
</organism>
<accession>A9B423</accession>
<keyword id="KW-0687">Ribonucleoprotein</keyword>
<keyword id="KW-0689">Ribosomal protein</keyword>
<keyword id="KW-0694">RNA-binding</keyword>
<keyword id="KW-0699">rRNA-binding</keyword>
<keyword id="KW-0820">tRNA-binding</keyword>
<feature type="chain" id="PRO_1000142412" description="Large ribosomal subunit protein uL5">
    <location>
        <begin position="1"/>
        <end position="179"/>
    </location>
</feature>
<protein>
    <recommendedName>
        <fullName evidence="1">Large ribosomal subunit protein uL5</fullName>
    </recommendedName>
    <alternativeName>
        <fullName evidence="2">50S ribosomal protein L5</fullName>
    </alternativeName>
</protein>
<dbReference type="EMBL" id="CP000875">
    <property type="protein sequence ID" value="ABX07556.1"/>
    <property type="molecule type" value="Genomic_DNA"/>
</dbReference>
<dbReference type="SMR" id="A9B423"/>
<dbReference type="FunCoup" id="A9B423">
    <property type="interactions" value="517"/>
</dbReference>
<dbReference type="STRING" id="316274.Haur_4926"/>
<dbReference type="KEGG" id="hau:Haur_4926"/>
<dbReference type="eggNOG" id="COG0094">
    <property type="taxonomic scope" value="Bacteria"/>
</dbReference>
<dbReference type="HOGENOM" id="CLU_061015_2_1_0"/>
<dbReference type="InParanoid" id="A9B423"/>
<dbReference type="Proteomes" id="UP000000787">
    <property type="component" value="Chromosome"/>
</dbReference>
<dbReference type="GO" id="GO:1990904">
    <property type="term" value="C:ribonucleoprotein complex"/>
    <property type="evidence" value="ECO:0007669"/>
    <property type="project" value="UniProtKB-KW"/>
</dbReference>
<dbReference type="GO" id="GO:0005840">
    <property type="term" value="C:ribosome"/>
    <property type="evidence" value="ECO:0007669"/>
    <property type="project" value="UniProtKB-KW"/>
</dbReference>
<dbReference type="GO" id="GO:0019843">
    <property type="term" value="F:rRNA binding"/>
    <property type="evidence" value="ECO:0007669"/>
    <property type="project" value="UniProtKB-UniRule"/>
</dbReference>
<dbReference type="GO" id="GO:0003735">
    <property type="term" value="F:structural constituent of ribosome"/>
    <property type="evidence" value="ECO:0007669"/>
    <property type="project" value="InterPro"/>
</dbReference>
<dbReference type="GO" id="GO:0000049">
    <property type="term" value="F:tRNA binding"/>
    <property type="evidence" value="ECO:0007669"/>
    <property type="project" value="UniProtKB-UniRule"/>
</dbReference>
<dbReference type="GO" id="GO:0006412">
    <property type="term" value="P:translation"/>
    <property type="evidence" value="ECO:0007669"/>
    <property type="project" value="UniProtKB-UniRule"/>
</dbReference>
<dbReference type="FunFam" id="3.30.1440.10:FF:000001">
    <property type="entry name" value="50S ribosomal protein L5"/>
    <property type="match status" value="1"/>
</dbReference>
<dbReference type="Gene3D" id="3.30.1440.10">
    <property type="match status" value="1"/>
</dbReference>
<dbReference type="HAMAP" id="MF_01333_B">
    <property type="entry name" value="Ribosomal_uL5_B"/>
    <property type="match status" value="1"/>
</dbReference>
<dbReference type="InterPro" id="IPR002132">
    <property type="entry name" value="Ribosomal_uL5"/>
</dbReference>
<dbReference type="InterPro" id="IPR020930">
    <property type="entry name" value="Ribosomal_uL5_bac-type"/>
</dbReference>
<dbReference type="InterPro" id="IPR031309">
    <property type="entry name" value="Ribosomal_uL5_C"/>
</dbReference>
<dbReference type="InterPro" id="IPR020929">
    <property type="entry name" value="Ribosomal_uL5_CS"/>
</dbReference>
<dbReference type="InterPro" id="IPR022803">
    <property type="entry name" value="Ribosomal_uL5_dom_sf"/>
</dbReference>
<dbReference type="InterPro" id="IPR031310">
    <property type="entry name" value="Ribosomal_uL5_N"/>
</dbReference>
<dbReference type="NCBIfam" id="NF000585">
    <property type="entry name" value="PRK00010.1"/>
    <property type="match status" value="1"/>
</dbReference>
<dbReference type="PANTHER" id="PTHR11994">
    <property type="entry name" value="60S RIBOSOMAL PROTEIN L11-RELATED"/>
    <property type="match status" value="1"/>
</dbReference>
<dbReference type="Pfam" id="PF00281">
    <property type="entry name" value="Ribosomal_L5"/>
    <property type="match status" value="1"/>
</dbReference>
<dbReference type="Pfam" id="PF00673">
    <property type="entry name" value="Ribosomal_L5_C"/>
    <property type="match status" value="1"/>
</dbReference>
<dbReference type="PIRSF" id="PIRSF002161">
    <property type="entry name" value="Ribosomal_L5"/>
    <property type="match status" value="1"/>
</dbReference>
<dbReference type="SUPFAM" id="SSF55282">
    <property type="entry name" value="RL5-like"/>
    <property type="match status" value="1"/>
</dbReference>
<dbReference type="PROSITE" id="PS00358">
    <property type="entry name" value="RIBOSOMAL_L5"/>
    <property type="match status" value="1"/>
</dbReference>
<proteinExistence type="inferred from homology"/>
<comment type="function">
    <text evidence="1">This is one of the proteins that bind and probably mediate the attachment of the 5S RNA into the large ribosomal subunit, where it forms part of the central protuberance. In the 70S ribosome it contacts protein S13 of the 30S subunit (bridge B1b), connecting the 2 subunits; this bridge is implicated in subunit movement. Contacts the P site tRNA; the 5S rRNA and some of its associated proteins might help stabilize positioning of ribosome-bound tRNAs.</text>
</comment>
<comment type="subunit">
    <text evidence="1">Part of the 50S ribosomal subunit; part of the 5S rRNA/L5/L18/L25 subcomplex. Contacts the 5S rRNA and the P site tRNA. Forms a bridge to the 30S subunit in the 70S ribosome.</text>
</comment>
<comment type="similarity">
    <text evidence="1">Belongs to the universal ribosomal protein uL5 family.</text>
</comment>
<sequence length="179" mass="20004">MARLKDVYLKTVAPALFKDFGFKSPMQVPRITKIVINIGLGEALQNPKAVEAAIGDLTMIAGQKPVVTRAKKSLAAFKLRQGMPIGAMVTLRNDRMYDFYDRLVNLALPRIRDFQGLSRKSFDGRGNYSIGIREQIIFPEIEYDKVDKIRGLEVAIVTTAPNDEQGFALLKALGMPFRD</sequence>